<comment type="function">
    <text evidence="1">Transfers a GMP moiety from GTP to Mo-molybdopterin (Mo-MPT) cofactor (Moco or molybdenum cofactor) to form Mo-molybdopterin guanine dinucleotide (Mo-MGD) cofactor.</text>
</comment>
<comment type="catalytic activity">
    <reaction evidence="1">
        <text>Mo-molybdopterin + GTP + H(+) = Mo-molybdopterin guanine dinucleotide + diphosphate</text>
        <dbReference type="Rhea" id="RHEA:34243"/>
        <dbReference type="ChEBI" id="CHEBI:15378"/>
        <dbReference type="ChEBI" id="CHEBI:33019"/>
        <dbReference type="ChEBI" id="CHEBI:37565"/>
        <dbReference type="ChEBI" id="CHEBI:71302"/>
        <dbReference type="ChEBI" id="CHEBI:71310"/>
        <dbReference type="EC" id="2.7.7.77"/>
    </reaction>
</comment>
<comment type="cofactor">
    <cofactor evidence="1">
        <name>Mg(2+)</name>
        <dbReference type="ChEBI" id="CHEBI:18420"/>
    </cofactor>
</comment>
<comment type="subunit">
    <text evidence="1">Monomer.</text>
</comment>
<comment type="subcellular location">
    <subcellularLocation>
        <location evidence="1">Cytoplasm</location>
    </subcellularLocation>
</comment>
<comment type="domain">
    <text evidence="1">The N-terminal domain determines nucleotide recognition and specific binding, while the C-terminal domain determines the specific binding to the target protein.</text>
</comment>
<comment type="similarity">
    <text evidence="1">Belongs to the MobA family.</text>
</comment>
<evidence type="ECO:0000255" key="1">
    <source>
        <dbReference type="HAMAP-Rule" id="MF_00316"/>
    </source>
</evidence>
<keyword id="KW-0963">Cytoplasm</keyword>
<keyword id="KW-0342">GTP-binding</keyword>
<keyword id="KW-0460">Magnesium</keyword>
<keyword id="KW-0479">Metal-binding</keyword>
<keyword id="KW-0501">Molybdenum cofactor biosynthesis</keyword>
<keyword id="KW-0547">Nucleotide-binding</keyword>
<keyword id="KW-0808">Transferase</keyword>
<sequence>MQPNITGVILAGGRSSRMGGNDKGLIPLNGKPLFQYVIDRFKPQVSDLVINANRNQGLYKESGIPVIDDIITGFVGPLAGMHAGLSYASTEWVVFAPCDVPALPSDLVSQLWQGKKQALAAYANDDERAHPTFALMHISLKTQLADYLIRGDRKLMLFLDSINAQRVKFSGKADLFSNLNTPADCDLWEQKRRGQ</sequence>
<feature type="chain" id="PRO_1000019166" description="Molybdenum cofactor guanylyltransferase">
    <location>
        <begin position="1"/>
        <end position="195"/>
    </location>
</feature>
<feature type="binding site" evidence="1">
    <location>
        <begin position="10"/>
        <end position="12"/>
    </location>
    <ligand>
        <name>GTP</name>
        <dbReference type="ChEBI" id="CHEBI:37565"/>
    </ligand>
</feature>
<feature type="binding site" evidence="1">
    <location>
        <position position="23"/>
    </location>
    <ligand>
        <name>GTP</name>
        <dbReference type="ChEBI" id="CHEBI:37565"/>
    </ligand>
</feature>
<feature type="binding site" evidence="1">
    <location>
        <position position="51"/>
    </location>
    <ligand>
        <name>GTP</name>
        <dbReference type="ChEBI" id="CHEBI:37565"/>
    </ligand>
</feature>
<feature type="binding site" evidence="1">
    <location>
        <position position="69"/>
    </location>
    <ligand>
        <name>GTP</name>
        <dbReference type="ChEBI" id="CHEBI:37565"/>
    </ligand>
</feature>
<feature type="binding site" evidence="1">
    <location>
        <position position="99"/>
    </location>
    <ligand>
        <name>GTP</name>
        <dbReference type="ChEBI" id="CHEBI:37565"/>
    </ligand>
</feature>
<feature type="binding site" evidence="1">
    <location>
        <position position="99"/>
    </location>
    <ligand>
        <name>Mg(2+)</name>
        <dbReference type="ChEBI" id="CHEBI:18420"/>
    </ligand>
</feature>
<gene>
    <name evidence="1" type="primary">mobA</name>
    <name type="ordered locus">YPN_0240</name>
    <name type="ORF">YP516_0223</name>
</gene>
<protein>
    <recommendedName>
        <fullName evidence="1">Molybdenum cofactor guanylyltransferase</fullName>
        <shortName evidence="1">MoCo guanylyltransferase</shortName>
        <ecNumber evidence="1">2.7.7.77</ecNumber>
    </recommendedName>
    <alternativeName>
        <fullName evidence="1">GTP:molybdopterin guanylyltransferase</fullName>
    </alternativeName>
    <alternativeName>
        <fullName evidence="1">Mo-MPT guanylyltransferase</fullName>
    </alternativeName>
    <alternativeName>
        <fullName evidence="1">Molybdopterin guanylyltransferase</fullName>
    </alternativeName>
    <alternativeName>
        <fullName evidence="1">Molybdopterin-guanine dinucleotide synthase</fullName>
        <shortName evidence="1">MGD synthase</shortName>
    </alternativeName>
</protein>
<accession>Q1CN57</accession>
<accession>C4GNG9</accession>
<dbReference type="EC" id="2.7.7.77" evidence="1"/>
<dbReference type="EMBL" id="CP000305">
    <property type="protein sequence ID" value="ABG16573.1"/>
    <property type="molecule type" value="Genomic_DNA"/>
</dbReference>
<dbReference type="EMBL" id="ACNQ01000005">
    <property type="protein sequence ID" value="EEO78456.1"/>
    <property type="molecule type" value="Genomic_DNA"/>
</dbReference>
<dbReference type="RefSeq" id="WP_002213171.1">
    <property type="nucleotide sequence ID" value="NZ_ACNQ01000005.1"/>
</dbReference>
<dbReference type="SMR" id="Q1CN57"/>
<dbReference type="GeneID" id="57974576"/>
<dbReference type="KEGG" id="ypn:YPN_0240"/>
<dbReference type="HOGENOM" id="CLU_055597_5_1_6"/>
<dbReference type="Proteomes" id="UP000008936">
    <property type="component" value="Chromosome"/>
</dbReference>
<dbReference type="GO" id="GO:0005737">
    <property type="term" value="C:cytoplasm"/>
    <property type="evidence" value="ECO:0007669"/>
    <property type="project" value="UniProtKB-SubCell"/>
</dbReference>
<dbReference type="GO" id="GO:0005525">
    <property type="term" value="F:GTP binding"/>
    <property type="evidence" value="ECO:0007669"/>
    <property type="project" value="UniProtKB-UniRule"/>
</dbReference>
<dbReference type="GO" id="GO:0046872">
    <property type="term" value="F:metal ion binding"/>
    <property type="evidence" value="ECO:0007669"/>
    <property type="project" value="UniProtKB-KW"/>
</dbReference>
<dbReference type="GO" id="GO:0061603">
    <property type="term" value="F:molybdenum cofactor guanylyltransferase activity"/>
    <property type="evidence" value="ECO:0007669"/>
    <property type="project" value="UniProtKB-EC"/>
</dbReference>
<dbReference type="GO" id="GO:1902758">
    <property type="term" value="P:bis(molybdopterin guanine dinucleotide)molybdenum biosynthetic process"/>
    <property type="evidence" value="ECO:0007669"/>
    <property type="project" value="TreeGrafter"/>
</dbReference>
<dbReference type="CDD" id="cd02503">
    <property type="entry name" value="MobA"/>
    <property type="match status" value="1"/>
</dbReference>
<dbReference type="Gene3D" id="3.90.550.10">
    <property type="entry name" value="Spore Coat Polysaccharide Biosynthesis Protein SpsA, Chain A"/>
    <property type="match status" value="1"/>
</dbReference>
<dbReference type="HAMAP" id="MF_00316">
    <property type="entry name" value="MobA"/>
    <property type="match status" value="1"/>
</dbReference>
<dbReference type="InterPro" id="IPR025877">
    <property type="entry name" value="MobA-like_NTP_Trfase"/>
</dbReference>
<dbReference type="InterPro" id="IPR013482">
    <property type="entry name" value="Molybde_CF_guanTrfase"/>
</dbReference>
<dbReference type="InterPro" id="IPR029044">
    <property type="entry name" value="Nucleotide-diphossugar_trans"/>
</dbReference>
<dbReference type="NCBIfam" id="TIGR02665">
    <property type="entry name" value="molyb_mobA"/>
    <property type="match status" value="1"/>
</dbReference>
<dbReference type="PANTHER" id="PTHR19136">
    <property type="entry name" value="MOLYBDENUM COFACTOR GUANYLYLTRANSFERASE"/>
    <property type="match status" value="1"/>
</dbReference>
<dbReference type="PANTHER" id="PTHR19136:SF81">
    <property type="entry name" value="MOLYBDENUM COFACTOR GUANYLYLTRANSFERASE"/>
    <property type="match status" value="1"/>
</dbReference>
<dbReference type="Pfam" id="PF12804">
    <property type="entry name" value="NTP_transf_3"/>
    <property type="match status" value="1"/>
</dbReference>
<dbReference type="SUPFAM" id="SSF53448">
    <property type="entry name" value="Nucleotide-diphospho-sugar transferases"/>
    <property type="match status" value="1"/>
</dbReference>
<reference key="1">
    <citation type="journal article" date="2006" name="J. Bacteriol.">
        <title>Complete genome sequence of Yersinia pestis strains Antiqua and Nepal516: evidence of gene reduction in an emerging pathogen.</title>
        <authorList>
            <person name="Chain P.S.G."/>
            <person name="Hu P."/>
            <person name="Malfatti S.A."/>
            <person name="Radnedge L."/>
            <person name="Larimer F."/>
            <person name="Vergez L.M."/>
            <person name="Worsham P."/>
            <person name="Chu M.C."/>
            <person name="Andersen G.L."/>
        </authorList>
    </citation>
    <scope>NUCLEOTIDE SEQUENCE [LARGE SCALE GENOMIC DNA]</scope>
    <source>
        <strain>Nepal516</strain>
    </source>
</reference>
<reference key="2">
    <citation type="submission" date="2009-04" db="EMBL/GenBank/DDBJ databases">
        <title>Yersinia pestis Nepal516A whole genome shotgun sequencing project.</title>
        <authorList>
            <person name="Plunkett G. III"/>
            <person name="Anderson B.D."/>
            <person name="Baumler D.J."/>
            <person name="Burland V."/>
            <person name="Cabot E.L."/>
            <person name="Glasner J.D."/>
            <person name="Mau B."/>
            <person name="Neeno-Eckwall E."/>
            <person name="Perna N.T."/>
            <person name="Munk A.C."/>
            <person name="Tapia R."/>
            <person name="Green L.D."/>
            <person name="Rogers Y.C."/>
            <person name="Detter J.C."/>
            <person name="Bruce D.C."/>
            <person name="Brettin T.S."/>
        </authorList>
    </citation>
    <scope>NUCLEOTIDE SEQUENCE [LARGE SCALE GENOMIC DNA]</scope>
    <source>
        <strain>Nepal516</strain>
    </source>
</reference>
<name>MOBA_YERPN</name>
<proteinExistence type="inferred from homology"/>
<organism>
    <name type="scientific">Yersinia pestis bv. Antiqua (strain Nepal516)</name>
    <dbReference type="NCBI Taxonomy" id="377628"/>
    <lineage>
        <taxon>Bacteria</taxon>
        <taxon>Pseudomonadati</taxon>
        <taxon>Pseudomonadota</taxon>
        <taxon>Gammaproteobacteria</taxon>
        <taxon>Enterobacterales</taxon>
        <taxon>Yersiniaceae</taxon>
        <taxon>Yersinia</taxon>
    </lineage>
</organism>